<keyword id="KW-0143">Chaperone</keyword>
<keyword id="KW-0963">Cytoplasm</keyword>
<keyword id="KW-1185">Reference proteome</keyword>
<keyword id="KW-0346">Stress response</keyword>
<reference key="1">
    <citation type="submission" date="2008-05" db="EMBL/GenBank/DDBJ databases">
        <title>Complete sequence of chromosome of Geobacter lovleyi SZ.</title>
        <authorList>
            <consortium name="US DOE Joint Genome Institute"/>
            <person name="Lucas S."/>
            <person name="Copeland A."/>
            <person name="Lapidus A."/>
            <person name="Glavina del Rio T."/>
            <person name="Dalin E."/>
            <person name="Tice H."/>
            <person name="Bruce D."/>
            <person name="Goodwin L."/>
            <person name="Pitluck S."/>
            <person name="Chertkov O."/>
            <person name="Meincke L."/>
            <person name="Brettin T."/>
            <person name="Detter J.C."/>
            <person name="Han C."/>
            <person name="Tapia R."/>
            <person name="Kuske C.R."/>
            <person name="Schmutz J."/>
            <person name="Larimer F."/>
            <person name="Land M."/>
            <person name="Hauser L."/>
            <person name="Kyrpides N."/>
            <person name="Mikhailova N."/>
            <person name="Sung Y."/>
            <person name="Fletcher K.E."/>
            <person name="Ritalahti K.M."/>
            <person name="Loeffler F.E."/>
            <person name="Richardson P."/>
        </authorList>
    </citation>
    <scope>NUCLEOTIDE SEQUENCE [LARGE SCALE GENOMIC DNA]</scope>
    <source>
        <strain>ATCC BAA-1151 / DSM 17278 / SZ</strain>
    </source>
</reference>
<feature type="chain" id="PRO_1000137572" description="Protein GrpE">
    <location>
        <begin position="1"/>
        <end position="181"/>
    </location>
</feature>
<feature type="region of interest" description="Disordered" evidence="2">
    <location>
        <begin position="1"/>
        <end position="21"/>
    </location>
</feature>
<feature type="compositionally biased region" description="Low complexity" evidence="2">
    <location>
        <begin position="8"/>
        <end position="21"/>
    </location>
</feature>
<name>GRPE_TRIL1</name>
<accession>B3E7X0</accession>
<organism>
    <name type="scientific">Trichlorobacter lovleyi (strain ATCC BAA-1151 / DSM 17278 / SZ)</name>
    <name type="common">Geobacter lovleyi</name>
    <dbReference type="NCBI Taxonomy" id="398767"/>
    <lineage>
        <taxon>Bacteria</taxon>
        <taxon>Pseudomonadati</taxon>
        <taxon>Thermodesulfobacteriota</taxon>
        <taxon>Desulfuromonadia</taxon>
        <taxon>Geobacterales</taxon>
        <taxon>Geobacteraceae</taxon>
        <taxon>Trichlorobacter</taxon>
    </lineage>
</organism>
<proteinExistence type="inferred from homology"/>
<protein>
    <recommendedName>
        <fullName evidence="1">Protein GrpE</fullName>
    </recommendedName>
    <alternativeName>
        <fullName evidence="1">HSP-70 cofactor</fullName>
    </alternativeName>
</protein>
<dbReference type="EMBL" id="CP001089">
    <property type="protein sequence ID" value="ACD96543.1"/>
    <property type="molecule type" value="Genomic_DNA"/>
</dbReference>
<dbReference type="RefSeq" id="WP_012470872.1">
    <property type="nucleotide sequence ID" value="NC_010814.1"/>
</dbReference>
<dbReference type="SMR" id="B3E7X0"/>
<dbReference type="STRING" id="398767.Glov_2830"/>
<dbReference type="KEGG" id="glo:Glov_2830"/>
<dbReference type="eggNOG" id="COG0576">
    <property type="taxonomic scope" value="Bacteria"/>
</dbReference>
<dbReference type="HOGENOM" id="CLU_057217_6_0_7"/>
<dbReference type="OrthoDB" id="9789811at2"/>
<dbReference type="Proteomes" id="UP000002420">
    <property type="component" value="Chromosome"/>
</dbReference>
<dbReference type="GO" id="GO:0005829">
    <property type="term" value="C:cytosol"/>
    <property type="evidence" value="ECO:0007669"/>
    <property type="project" value="TreeGrafter"/>
</dbReference>
<dbReference type="GO" id="GO:0000774">
    <property type="term" value="F:adenyl-nucleotide exchange factor activity"/>
    <property type="evidence" value="ECO:0007669"/>
    <property type="project" value="InterPro"/>
</dbReference>
<dbReference type="GO" id="GO:0042803">
    <property type="term" value="F:protein homodimerization activity"/>
    <property type="evidence" value="ECO:0007669"/>
    <property type="project" value="InterPro"/>
</dbReference>
<dbReference type="GO" id="GO:0051087">
    <property type="term" value="F:protein-folding chaperone binding"/>
    <property type="evidence" value="ECO:0007669"/>
    <property type="project" value="InterPro"/>
</dbReference>
<dbReference type="GO" id="GO:0051082">
    <property type="term" value="F:unfolded protein binding"/>
    <property type="evidence" value="ECO:0007669"/>
    <property type="project" value="TreeGrafter"/>
</dbReference>
<dbReference type="GO" id="GO:0006457">
    <property type="term" value="P:protein folding"/>
    <property type="evidence" value="ECO:0007669"/>
    <property type="project" value="InterPro"/>
</dbReference>
<dbReference type="CDD" id="cd00446">
    <property type="entry name" value="GrpE"/>
    <property type="match status" value="1"/>
</dbReference>
<dbReference type="FunFam" id="2.30.22.10:FF:000001">
    <property type="entry name" value="Protein GrpE"/>
    <property type="match status" value="1"/>
</dbReference>
<dbReference type="Gene3D" id="3.90.20.20">
    <property type="match status" value="1"/>
</dbReference>
<dbReference type="Gene3D" id="2.30.22.10">
    <property type="entry name" value="Head domain of nucleotide exchange factor GrpE"/>
    <property type="match status" value="1"/>
</dbReference>
<dbReference type="HAMAP" id="MF_01151">
    <property type="entry name" value="GrpE"/>
    <property type="match status" value="1"/>
</dbReference>
<dbReference type="InterPro" id="IPR000740">
    <property type="entry name" value="GrpE"/>
</dbReference>
<dbReference type="InterPro" id="IPR013805">
    <property type="entry name" value="GrpE_coiled_coil"/>
</dbReference>
<dbReference type="InterPro" id="IPR009012">
    <property type="entry name" value="GrpE_head"/>
</dbReference>
<dbReference type="NCBIfam" id="NF010738">
    <property type="entry name" value="PRK14140.1"/>
    <property type="match status" value="1"/>
</dbReference>
<dbReference type="NCBIfam" id="NF010748">
    <property type="entry name" value="PRK14150.1"/>
    <property type="match status" value="1"/>
</dbReference>
<dbReference type="NCBIfam" id="NF010755">
    <property type="entry name" value="PRK14158.1"/>
    <property type="match status" value="1"/>
</dbReference>
<dbReference type="PANTHER" id="PTHR21237">
    <property type="entry name" value="GRPE PROTEIN"/>
    <property type="match status" value="1"/>
</dbReference>
<dbReference type="PANTHER" id="PTHR21237:SF23">
    <property type="entry name" value="GRPE PROTEIN HOMOLOG, MITOCHONDRIAL"/>
    <property type="match status" value="1"/>
</dbReference>
<dbReference type="Pfam" id="PF01025">
    <property type="entry name" value="GrpE"/>
    <property type="match status" value="1"/>
</dbReference>
<dbReference type="PRINTS" id="PR00773">
    <property type="entry name" value="GRPEPROTEIN"/>
</dbReference>
<dbReference type="SUPFAM" id="SSF58014">
    <property type="entry name" value="Coiled-coil domain of nucleotide exchange factor GrpE"/>
    <property type="match status" value="1"/>
</dbReference>
<dbReference type="SUPFAM" id="SSF51064">
    <property type="entry name" value="Head domain of nucleotide exchange factor GrpE"/>
    <property type="match status" value="1"/>
</dbReference>
<dbReference type="PROSITE" id="PS01071">
    <property type="entry name" value="GRPE"/>
    <property type="match status" value="1"/>
</dbReference>
<gene>
    <name evidence="1" type="primary">grpE</name>
    <name type="ordered locus">Glov_2830</name>
</gene>
<evidence type="ECO:0000255" key="1">
    <source>
        <dbReference type="HAMAP-Rule" id="MF_01151"/>
    </source>
</evidence>
<evidence type="ECO:0000256" key="2">
    <source>
        <dbReference type="SAM" id="MobiDB-lite"/>
    </source>
</evidence>
<sequence>MNKEQQDLQTEQEAAVETAELTPEQQLVQLQEKLAAKEQEAKDNWDKLLRERADLENYRKRASREKEELLNYGIKSLVEEVLPVLDNLERALEHANEDGLPALVEGVKMTHTLLQTALKKFGVCAVDGNCGTLFDPAFHQAMAQVETSDHPNNTIVQEFQKGYLLKERLLRPSMVSVAKNP</sequence>
<comment type="function">
    <text evidence="1">Participates actively in the response to hyperosmotic and heat shock by preventing the aggregation of stress-denatured proteins, in association with DnaK and GrpE. It is the nucleotide exchange factor for DnaK and may function as a thermosensor. Unfolded proteins bind initially to DnaJ; upon interaction with the DnaJ-bound protein, DnaK hydrolyzes its bound ATP, resulting in the formation of a stable complex. GrpE releases ADP from DnaK; ATP binding to DnaK triggers the release of the substrate protein, thus completing the reaction cycle. Several rounds of ATP-dependent interactions between DnaJ, DnaK and GrpE are required for fully efficient folding.</text>
</comment>
<comment type="subunit">
    <text evidence="1">Homodimer.</text>
</comment>
<comment type="subcellular location">
    <subcellularLocation>
        <location evidence="1">Cytoplasm</location>
    </subcellularLocation>
</comment>
<comment type="similarity">
    <text evidence="1">Belongs to the GrpE family.</text>
</comment>